<organism>
    <name type="scientific">Histophilus somni (strain 2336)</name>
    <name type="common">Haemophilus somnus</name>
    <dbReference type="NCBI Taxonomy" id="228400"/>
    <lineage>
        <taxon>Bacteria</taxon>
        <taxon>Pseudomonadati</taxon>
        <taxon>Pseudomonadota</taxon>
        <taxon>Gammaproteobacteria</taxon>
        <taxon>Pasteurellales</taxon>
        <taxon>Pasteurellaceae</taxon>
        <taxon>Histophilus</taxon>
    </lineage>
</organism>
<evidence type="ECO:0000255" key="1">
    <source>
        <dbReference type="HAMAP-Rule" id="MF_01558"/>
    </source>
</evidence>
<evidence type="ECO:0000255" key="2">
    <source>
        <dbReference type="PROSITE-ProRule" id="PRU01083"/>
    </source>
</evidence>
<comment type="function">
    <text evidence="1">This enzyme scavenges exogenous and endogenous cytidine and 2'-deoxycytidine for UMP synthesis.</text>
</comment>
<comment type="catalytic activity">
    <reaction evidence="1">
        <text>cytidine + H2O + H(+) = uridine + NH4(+)</text>
        <dbReference type="Rhea" id="RHEA:16069"/>
        <dbReference type="ChEBI" id="CHEBI:15377"/>
        <dbReference type="ChEBI" id="CHEBI:15378"/>
        <dbReference type="ChEBI" id="CHEBI:16704"/>
        <dbReference type="ChEBI" id="CHEBI:17562"/>
        <dbReference type="ChEBI" id="CHEBI:28938"/>
        <dbReference type="EC" id="3.5.4.5"/>
    </reaction>
</comment>
<comment type="catalytic activity">
    <reaction evidence="1">
        <text>2'-deoxycytidine + H2O + H(+) = 2'-deoxyuridine + NH4(+)</text>
        <dbReference type="Rhea" id="RHEA:13433"/>
        <dbReference type="ChEBI" id="CHEBI:15377"/>
        <dbReference type="ChEBI" id="CHEBI:15378"/>
        <dbReference type="ChEBI" id="CHEBI:15698"/>
        <dbReference type="ChEBI" id="CHEBI:16450"/>
        <dbReference type="ChEBI" id="CHEBI:28938"/>
        <dbReference type="EC" id="3.5.4.5"/>
    </reaction>
</comment>
<comment type="cofactor">
    <cofactor evidence="1">
        <name>Zn(2+)</name>
        <dbReference type="ChEBI" id="CHEBI:29105"/>
    </cofactor>
    <text evidence="1">Binds 1 zinc ion.</text>
</comment>
<comment type="subunit">
    <text evidence="1">Homodimer.</text>
</comment>
<comment type="similarity">
    <text evidence="1">Belongs to the cytidine and deoxycytidylate deaminase family.</text>
</comment>
<gene>
    <name evidence="1" type="primary">cdd</name>
    <name type="ordered locus">HSM_0805</name>
</gene>
<accession>B0USP2</accession>
<dbReference type="EC" id="3.5.4.5" evidence="1"/>
<dbReference type="EMBL" id="CP000947">
    <property type="protein sequence ID" value="ACA32478.1"/>
    <property type="molecule type" value="Genomic_DNA"/>
</dbReference>
<dbReference type="RefSeq" id="WP_012341620.1">
    <property type="nucleotide sequence ID" value="NC_010519.1"/>
</dbReference>
<dbReference type="SMR" id="B0USP2"/>
<dbReference type="STRING" id="228400.HSM_0805"/>
<dbReference type="GeneID" id="31487094"/>
<dbReference type="KEGG" id="hsm:HSM_0805"/>
<dbReference type="HOGENOM" id="CLU_052424_0_0_6"/>
<dbReference type="GO" id="GO:0005829">
    <property type="term" value="C:cytosol"/>
    <property type="evidence" value="ECO:0007669"/>
    <property type="project" value="TreeGrafter"/>
</dbReference>
<dbReference type="GO" id="GO:0004126">
    <property type="term" value="F:cytidine deaminase activity"/>
    <property type="evidence" value="ECO:0007669"/>
    <property type="project" value="UniProtKB-UniRule"/>
</dbReference>
<dbReference type="GO" id="GO:0042802">
    <property type="term" value="F:identical protein binding"/>
    <property type="evidence" value="ECO:0007669"/>
    <property type="project" value="UniProtKB-ARBA"/>
</dbReference>
<dbReference type="GO" id="GO:0008270">
    <property type="term" value="F:zinc ion binding"/>
    <property type="evidence" value="ECO:0007669"/>
    <property type="project" value="UniProtKB-UniRule"/>
</dbReference>
<dbReference type="GO" id="GO:0009972">
    <property type="term" value="P:cytidine deamination"/>
    <property type="evidence" value="ECO:0007669"/>
    <property type="project" value="InterPro"/>
</dbReference>
<dbReference type="CDD" id="cd01283">
    <property type="entry name" value="cytidine_deaminase"/>
    <property type="match status" value="2"/>
</dbReference>
<dbReference type="FunFam" id="3.40.140.10:FF:000007">
    <property type="entry name" value="Cytidine deaminase"/>
    <property type="match status" value="1"/>
</dbReference>
<dbReference type="Gene3D" id="3.40.140.10">
    <property type="entry name" value="Cytidine Deaminase, domain 2"/>
    <property type="match status" value="2"/>
</dbReference>
<dbReference type="HAMAP" id="MF_01558">
    <property type="entry name" value="Cyt_deam"/>
    <property type="match status" value="1"/>
</dbReference>
<dbReference type="InterPro" id="IPR016192">
    <property type="entry name" value="APOBEC/CMP_deaminase_Zn-bd"/>
</dbReference>
<dbReference type="InterPro" id="IPR002125">
    <property type="entry name" value="CMP_dCMP_dom"/>
</dbReference>
<dbReference type="InterPro" id="IPR013171">
    <property type="entry name" value="Cyd/dCyd_deaminase_Zn-bd"/>
</dbReference>
<dbReference type="InterPro" id="IPR050202">
    <property type="entry name" value="Cyt/Deoxycyt_deaminase"/>
</dbReference>
<dbReference type="InterPro" id="IPR006263">
    <property type="entry name" value="Cyt_deam_dimer"/>
</dbReference>
<dbReference type="InterPro" id="IPR016193">
    <property type="entry name" value="Cytidine_deaminase-like"/>
</dbReference>
<dbReference type="InterPro" id="IPR020797">
    <property type="entry name" value="Cytidine_deaminase_bacteria"/>
</dbReference>
<dbReference type="NCBIfam" id="TIGR01355">
    <property type="entry name" value="cyt_deam_dimer"/>
    <property type="match status" value="1"/>
</dbReference>
<dbReference type="NCBIfam" id="NF006537">
    <property type="entry name" value="PRK09027.1"/>
    <property type="match status" value="1"/>
</dbReference>
<dbReference type="PANTHER" id="PTHR11644">
    <property type="entry name" value="CYTIDINE DEAMINASE"/>
    <property type="match status" value="1"/>
</dbReference>
<dbReference type="PANTHER" id="PTHR11644:SF2">
    <property type="entry name" value="CYTIDINE DEAMINASE"/>
    <property type="match status" value="1"/>
</dbReference>
<dbReference type="Pfam" id="PF00383">
    <property type="entry name" value="dCMP_cyt_deam_1"/>
    <property type="match status" value="1"/>
</dbReference>
<dbReference type="Pfam" id="PF08211">
    <property type="entry name" value="dCMP_cyt_deam_2"/>
    <property type="match status" value="1"/>
</dbReference>
<dbReference type="PIRSF" id="PIRSF006334">
    <property type="entry name" value="Cdd_plus_pseudo"/>
    <property type="match status" value="1"/>
</dbReference>
<dbReference type="SUPFAM" id="SSF53927">
    <property type="entry name" value="Cytidine deaminase-like"/>
    <property type="match status" value="2"/>
</dbReference>
<dbReference type="PROSITE" id="PS00903">
    <property type="entry name" value="CYT_DCMP_DEAMINASES_1"/>
    <property type="match status" value="1"/>
</dbReference>
<dbReference type="PROSITE" id="PS51747">
    <property type="entry name" value="CYT_DCMP_DEAMINASES_2"/>
    <property type="match status" value="2"/>
</dbReference>
<protein>
    <recommendedName>
        <fullName evidence="1">Cytidine deaminase</fullName>
        <ecNumber evidence="1">3.5.4.5</ecNumber>
    </recommendedName>
    <alternativeName>
        <fullName evidence="1">Cytidine aminohydrolase</fullName>
        <shortName evidence="1">CDA</shortName>
    </alternativeName>
</protein>
<name>CDD_HISS2</name>
<proteinExistence type="inferred from homology"/>
<reference key="1">
    <citation type="submission" date="2008-02" db="EMBL/GenBank/DDBJ databases">
        <title>Complete sequence of Haemophilus somnus 2336.</title>
        <authorList>
            <consortium name="US DOE Joint Genome Institute"/>
            <person name="Siddaramappa S."/>
            <person name="Duncan A.J."/>
            <person name="Challacombe J.F."/>
            <person name="Rainey D."/>
            <person name="Gillaspy A.F."/>
            <person name="Carson M."/>
            <person name="Gipson J."/>
            <person name="Gipson M."/>
            <person name="Bruce D."/>
            <person name="Detter J.C."/>
            <person name="Han C.S."/>
            <person name="Land M."/>
            <person name="Tapia R."/>
            <person name="Thompson L.S."/>
            <person name="Orvis J."/>
            <person name="Zaitshik J."/>
            <person name="Barnes G."/>
            <person name="Brettin T.S."/>
            <person name="Dyer D.W."/>
            <person name="Inzana T.J."/>
        </authorList>
    </citation>
    <scope>NUCLEOTIDE SEQUENCE [LARGE SCALE GENOMIC DNA]</scope>
    <source>
        <strain>2336</strain>
    </source>
</reference>
<feature type="chain" id="PRO_1000087794" description="Cytidine deaminase">
    <location>
        <begin position="1"/>
        <end position="303"/>
    </location>
</feature>
<feature type="domain" description="CMP/dCMP-type deaminase 1" evidence="2">
    <location>
        <begin position="57"/>
        <end position="172"/>
    </location>
</feature>
<feature type="domain" description="CMP/dCMP-type deaminase 2" evidence="2">
    <location>
        <begin position="196"/>
        <end position="303"/>
    </location>
</feature>
<feature type="active site" description="Proton donor" evidence="1">
    <location>
        <position position="113"/>
    </location>
</feature>
<feature type="binding site" evidence="1">
    <location>
        <begin position="98"/>
        <end position="100"/>
    </location>
    <ligand>
        <name>substrate</name>
    </ligand>
</feature>
<feature type="binding site" evidence="1">
    <location>
        <position position="111"/>
    </location>
    <ligand>
        <name>Zn(2+)</name>
        <dbReference type="ChEBI" id="CHEBI:29105"/>
        <note>catalytic</note>
    </ligand>
</feature>
<feature type="binding site" evidence="1">
    <location>
        <position position="138"/>
    </location>
    <ligand>
        <name>Zn(2+)</name>
        <dbReference type="ChEBI" id="CHEBI:29105"/>
        <note>catalytic</note>
    </ligand>
</feature>
<feature type="binding site" evidence="1">
    <location>
        <position position="141"/>
    </location>
    <ligand>
        <name>Zn(2+)</name>
        <dbReference type="ChEBI" id="CHEBI:29105"/>
        <note>catalytic</note>
    </ligand>
</feature>
<sequence length="303" mass="34354">MTHHSLKHISDRIKQALNQIENRNLAQDLWYILGEQNFQGFLPAFTVNHFCEKYHMTDKELALILLPVSACYANPTISHFSVGAIAKGESGNFYFGANQEFCTTNIQQTVHAEQSAISHAWMRRESKITEITVNYTPCGHCRQFMNELNSAETLRIHLPHSQDNLLHHYLPDAFGPHNLQIDNRLFDKKAHNLFLITEDPLIQAALDAANQSHAPYSKTYSGIALQLQDQQIFQGSYAENAAFNPSLPPLQTALNYLLLNGNEVENIARAVLVEQPFRLSYRGMTEELLAYLGDIPLDYIQVS</sequence>
<keyword id="KW-0378">Hydrolase</keyword>
<keyword id="KW-0479">Metal-binding</keyword>
<keyword id="KW-0862">Zinc</keyword>